<protein>
    <recommendedName>
        <fullName>p-hydroxyphenylacetate 3-hydroxylase, reductase component</fullName>
        <ecNumber evidence="3">1.5.1.36</ecNumber>
    </recommendedName>
    <alternativeName>
        <fullName evidence="1">4-HPA 3-monooxygenase small component</fullName>
    </alternativeName>
    <alternativeName>
        <fullName>Flavin:NAD(+) oxidoreductase</fullName>
    </alternativeName>
    <alternativeName>
        <fullName>p-hydroxyphenylacetate 3-hydroxylase C1 component</fullName>
    </alternativeName>
</protein>
<organism>
    <name type="scientific">Acinetobacter baumannii</name>
    <dbReference type="NCBI Taxonomy" id="470"/>
    <lineage>
        <taxon>Bacteria</taxon>
        <taxon>Pseudomonadati</taxon>
        <taxon>Pseudomonadota</taxon>
        <taxon>Gammaproteobacteria</taxon>
        <taxon>Moraxellales</taxon>
        <taxon>Moraxellaceae</taxon>
        <taxon>Acinetobacter</taxon>
        <taxon>Acinetobacter calcoaceticus/baumannii complex</taxon>
    </lineage>
</organism>
<feature type="initiator methionine" description="Removed" evidence="7">
    <location>
        <position position="1"/>
    </location>
</feature>
<feature type="chain" id="PRO_0000415754" description="p-hydroxyphenylacetate 3-hydroxylase, reductase component">
    <location>
        <begin position="2"/>
        <end position="315"/>
    </location>
</feature>
<feature type="helix" evidence="9">
    <location>
        <begin position="16"/>
        <end position="23"/>
    </location>
</feature>
<feature type="strand" evidence="9">
    <location>
        <begin position="31"/>
        <end position="36"/>
    </location>
</feature>
<feature type="strand" evidence="9">
    <location>
        <begin position="42"/>
        <end position="47"/>
    </location>
</feature>
<feature type="strand" evidence="9">
    <location>
        <begin position="51"/>
        <end position="54"/>
    </location>
</feature>
<feature type="turn" evidence="9">
    <location>
        <begin position="55"/>
        <end position="58"/>
    </location>
</feature>
<feature type="strand" evidence="9">
    <location>
        <begin position="59"/>
        <end position="65"/>
    </location>
</feature>
<feature type="helix" evidence="9">
    <location>
        <begin position="71"/>
        <end position="76"/>
    </location>
</feature>
<feature type="strand" evidence="9">
    <location>
        <begin position="78"/>
        <end position="84"/>
    </location>
</feature>
<feature type="helix" evidence="9">
    <location>
        <begin position="87"/>
        <end position="89"/>
    </location>
</feature>
<feature type="helix" evidence="9">
    <location>
        <begin position="90"/>
        <end position="95"/>
    </location>
</feature>
<feature type="turn" evidence="9">
    <location>
        <begin position="101"/>
        <end position="106"/>
    </location>
</feature>
<feature type="strand" evidence="9">
    <location>
        <begin position="109"/>
        <end position="111"/>
    </location>
</feature>
<feature type="helix" evidence="9">
    <location>
        <begin position="113"/>
        <end position="115"/>
    </location>
</feature>
<feature type="strand" evidence="9">
    <location>
        <begin position="117"/>
        <end position="121"/>
    </location>
</feature>
<feature type="strand" evidence="9">
    <location>
        <begin position="123"/>
        <end position="136"/>
    </location>
</feature>
<feature type="strand" evidence="9">
    <location>
        <begin position="139"/>
        <end position="151"/>
    </location>
</feature>
<feature type="strand" evidence="9">
    <location>
        <begin position="158"/>
        <end position="160"/>
    </location>
</feature>
<feature type="strand" evidence="9">
    <location>
        <begin position="163"/>
        <end position="168"/>
    </location>
</feature>
<feature type="strand" evidence="9">
    <location>
        <begin position="178"/>
        <end position="180"/>
    </location>
</feature>
<feature type="helix" evidence="9">
    <location>
        <begin position="181"/>
        <end position="183"/>
    </location>
</feature>
<feature type="strand" evidence="9">
    <location>
        <begin position="184"/>
        <end position="186"/>
    </location>
</feature>
<feature type="helix" evidence="9">
    <location>
        <begin position="187"/>
        <end position="189"/>
    </location>
</feature>
<feature type="helix" evidence="9">
    <location>
        <begin position="192"/>
        <end position="213"/>
    </location>
</feature>
<feature type="helix" evidence="9">
    <location>
        <begin position="218"/>
        <end position="227"/>
    </location>
</feature>
<feature type="helix" evidence="9">
    <location>
        <begin position="235"/>
        <end position="242"/>
    </location>
</feature>
<feature type="helix" evidence="9">
    <location>
        <begin position="246"/>
        <end position="258"/>
    </location>
</feature>
<feature type="strand" evidence="9">
    <location>
        <begin position="261"/>
        <end position="264"/>
    </location>
</feature>
<feature type="strand" evidence="9">
    <location>
        <begin position="266"/>
        <end position="271"/>
    </location>
</feature>
<feature type="helix" evidence="9">
    <location>
        <begin position="273"/>
        <end position="293"/>
    </location>
</feature>
<feature type="helix" evidence="9">
    <location>
        <begin position="294"/>
        <end position="296"/>
    </location>
</feature>
<feature type="helix" evidence="9">
    <location>
        <begin position="299"/>
        <end position="313"/>
    </location>
</feature>
<reference evidence="6 8" key="1">
    <citation type="journal article" date="2004" name="Biochim. Biophys. Acta">
        <title>Cloning and expression of p-hydroxyphenylacetate 3-hydroxylase from Acinetobacter baumannii: evidence of the divergence of enzymes in the class of two-protein component aromatic hydroxylases.</title>
        <authorList>
            <person name="Thotsaporn K."/>
            <person name="Sucharitakul J."/>
            <person name="Wongratana J."/>
            <person name="Suadee C."/>
            <person name="Chaiyen P."/>
        </authorList>
    </citation>
    <scope>NUCLEOTIDE SEQUENCE [GENOMIC DNA]</scope>
    <scope>PROTEIN SEQUENCE OF 2-27</scope>
    <scope>CATALYTIC ACTIVITY</scope>
    <scope>KINETIC PARAMETERS</scope>
</reference>
<reference evidence="6" key="2">
    <citation type="journal article" date="2001" name="Eur. J. Biochem.">
        <title>A novel two-protein component flavoprotein hydroxylase.</title>
        <authorList>
            <person name="Chaiyen P."/>
            <person name="Suadee C."/>
            <person name="Wilairat P."/>
        </authorList>
    </citation>
    <scope>FUNCTION</scope>
    <scope>CATALYTIC ACTIVITY</scope>
    <scope>KINETIC PARAMETERS</scope>
    <scope>SUBUNIT</scope>
    <scope>PATHWAY</scope>
    <scope>ACTIVITY REGULATION</scope>
</reference>
<reference evidence="6" key="3">
    <citation type="journal article" date="2005" name="Biochemistry">
        <title>The reductase of p-hydroxyphenylacetate 3-hydroxylase from Acinetobacter baumannii requires p-hydroxyphenylacetate for effective catalysis.</title>
        <authorList>
            <person name="Sucharitakul J."/>
            <person name="Chaiyen P."/>
            <person name="Entsch B."/>
            <person name="Ballou D.P."/>
        </authorList>
    </citation>
    <scope>FUNCTION</scope>
    <scope>ACTIVITY REGULATION</scope>
    <scope>REDOX POTENTIAL</scope>
</reference>
<reference evidence="6" key="4">
    <citation type="journal article" date="2007" name="Biochemistry">
        <title>Kinetics of a two-component p-hydroxyphenylacetate hydroxylase explain how reduced flavin is transferred from the reductase to the oxygenase.</title>
        <authorList>
            <person name="Sucharitakul J."/>
            <person name="Phongsak T."/>
            <person name="Entsch B."/>
            <person name="Svasti J."/>
            <person name="Chaiyen P."/>
            <person name="Ballou D.P."/>
        </authorList>
    </citation>
    <scope>FUNCTION</scope>
    <scope>ACTIVITY REGULATION</scope>
</reference>
<name>HPAHR_ACIBA</name>
<keyword id="KW-0002">3D-structure</keyword>
<keyword id="KW-0058">Aromatic hydrocarbons catabolism</keyword>
<keyword id="KW-0903">Direct protein sequencing</keyword>
<keyword id="KW-0274">FAD</keyword>
<keyword id="KW-0285">Flavoprotein</keyword>
<keyword id="KW-0288">FMN</keyword>
<keyword id="KW-0520">NAD</keyword>
<keyword id="KW-0560">Oxidoreductase</keyword>
<dbReference type="EC" id="1.5.1.36" evidence="3"/>
<dbReference type="EMBL" id="AY566613">
    <property type="protein sequence ID" value="AAS75430.1"/>
    <property type="molecule type" value="Genomic_DNA"/>
</dbReference>
<dbReference type="RefSeq" id="WP_002047311.1">
    <property type="nucleotide sequence ID" value="NZ_VHGP01000058.1"/>
</dbReference>
<dbReference type="PDB" id="5ZC2">
    <property type="method" value="X-ray"/>
    <property type="resolution" value="2.90 A"/>
    <property type="chains" value="A/B=1-315"/>
</dbReference>
<dbReference type="PDB" id="5ZYR">
    <property type="method" value="X-ray"/>
    <property type="resolution" value="2.20 A"/>
    <property type="chains" value="A/B=1-315"/>
</dbReference>
<dbReference type="PDBsum" id="5ZC2"/>
<dbReference type="PDBsum" id="5ZYR"/>
<dbReference type="SASBDB" id="Q6Q271"/>
<dbReference type="SMR" id="Q6Q271"/>
<dbReference type="PATRIC" id="fig|470.1289.peg.1766"/>
<dbReference type="eggNOG" id="COG1853">
    <property type="taxonomic scope" value="Bacteria"/>
</dbReference>
<dbReference type="BRENDA" id="1.14.14.9">
    <property type="organism ID" value="98"/>
</dbReference>
<dbReference type="SABIO-RK" id="Q6Q271"/>
<dbReference type="UniPathway" id="UPA00208">
    <property type="reaction ID" value="UER00416"/>
</dbReference>
<dbReference type="GO" id="GO:0036382">
    <property type="term" value="F:flavin reductase (NADH) activity"/>
    <property type="evidence" value="ECO:0007669"/>
    <property type="project" value="UniProtKB-EC"/>
</dbReference>
<dbReference type="GO" id="GO:0010181">
    <property type="term" value="F:FMN binding"/>
    <property type="evidence" value="ECO:0007669"/>
    <property type="project" value="InterPro"/>
</dbReference>
<dbReference type="GO" id="GO:0042602">
    <property type="term" value="F:riboflavin reductase (NADPH) activity"/>
    <property type="evidence" value="ECO:0007669"/>
    <property type="project" value="TreeGrafter"/>
</dbReference>
<dbReference type="GO" id="GO:0009056">
    <property type="term" value="P:catabolic process"/>
    <property type="evidence" value="ECO:0007669"/>
    <property type="project" value="UniProtKB-KW"/>
</dbReference>
<dbReference type="Gene3D" id="2.30.110.10">
    <property type="entry name" value="Electron Transport, Fmn-binding Protein, Chain A"/>
    <property type="match status" value="1"/>
</dbReference>
<dbReference type="Gene3D" id="1.10.10.10">
    <property type="entry name" value="Winged helix-like DNA-binding domain superfamily/Winged helix DNA-binding domain"/>
    <property type="match status" value="1"/>
</dbReference>
<dbReference type="InterPro" id="IPR002563">
    <property type="entry name" value="Flavin_Rdtase-like_dom"/>
</dbReference>
<dbReference type="InterPro" id="IPR050268">
    <property type="entry name" value="NADH-dep_flavin_reductase"/>
</dbReference>
<dbReference type="InterPro" id="IPR012349">
    <property type="entry name" value="Split_barrel_FMN-bd"/>
</dbReference>
<dbReference type="InterPro" id="IPR036388">
    <property type="entry name" value="WH-like_DNA-bd_sf"/>
</dbReference>
<dbReference type="InterPro" id="IPR036390">
    <property type="entry name" value="WH_DNA-bd_sf"/>
</dbReference>
<dbReference type="NCBIfam" id="NF045919">
    <property type="entry name" value="HphnlacHdxRed"/>
    <property type="match status" value="1"/>
</dbReference>
<dbReference type="PANTHER" id="PTHR30466">
    <property type="entry name" value="FLAVIN REDUCTASE"/>
    <property type="match status" value="1"/>
</dbReference>
<dbReference type="PANTHER" id="PTHR30466:SF11">
    <property type="entry name" value="FLAVIN-DEPENDENT MONOOXYGENASE, REDUCTASE SUBUNIT HSAB"/>
    <property type="match status" value="1"/>
</dbReference>
<dbReference type="Pfam" id="PF01613">
    <property type="entry name" value="Flavin_Reduct"/>
    <property type="match status" value="1"/>
</dbReference>
<dbReference type="SMART" id="SM00903">
    <property type="entry name" value="Flavin_Reduct"/>
    <property type="match status" value="1"/>
</dbReference>
<dbReference type="SUPFAM" id="SSF50475">
    <property type="entry name" value="FMN-binding split barrel"/>
    <property type="match status" value="1"/>
</dbReference>
<dbReference type="SUPFAM" id="SSF46785">
    <property type="entry name" value="Winged helix' DNA-binding domain"/>
    <property type="match status" value="1"/>
</dbReference>
<proteinExistence type="evidence at protein level"/>
<accession>Q6Q271</accession>
<evidence type="ECO:0000250" key="1">
    <source>
        <dbReference type="UniProtKB" id="Q5SJP7"/>
    </source>
</evidence>
<evidence type="ECO:0000269" key="2">
    <source>
    </source>
</evidence>
<evidence type="ECO:0000269" key="3">
    <source>
    </source>
</evidence>
<evidence type="ECO:0000269" key="4">
    <source>
    </source>
</evidence>
<evidence type="ECO:0000269" key="5">
    <source>
    </source>
</evidence>
<evidence type="ECO:0000305" key="6"/>
<evidence type="ECO:0000305" key="7">
    <source>
    </source>
</evidence>
<evidence type="ECO:0000312" key="8">
    <source>
        <dbReference type="EMBL" id="AAS75430.1"/>
    </source>
</evidence>
<evidence type="ECO:0007829" key="9">
    <source>
        <dbReference type="PDB" id="5ZYR"/>
    </source>
</evidence>
<gene>
    <name evidence="8" type="primary">C1-hpah</name>
</gene>
<comment type="function">
    <text evidence="2 4 5">Reductase component of a two-component system that supplies reduced FMN (FMNH2) to the oxygenase component to catalyze the hydroxylation of 4-hydroxyphenylacetic acid, leading to the production of 3,4-dihydroxyphenylacetate (3,4-DHPA). Catalyzes the reduction of free flavins (FMN, FAD and riboflavin) by NADH. Subsequently, the reduced flavins diffuse to the oxygenase component C2.</text>
</comment>
<comment type="catalytic activity">
    <reaction evidence="2 3">
        <text>a reduced flavin + NAD(+) = an oxidized flavin + NADH + 2 H(+)</text>
        <dbReference type="Rhea" id="RHEA:31303"/>
        <dbReference type="ChEBI" id="CHEBI:15378"/>
        <dbReference type="ChEBI" id="CHEBI:57540"/>
        <dbReference type="ChEBI" id="CHEBI:57945"/>
        <dbReference type="ChEBI" id="CHEBI:60531"/>
        <dbReference type="ChEBI" id="CHEBI:62787"/>
        <dbReference type="EC" id="1.5.1.36"/>
    </reaction>
</comment>
<comment type="activity regulation">
    <text evidence="2 4 5">Flavin concentrations greater than 15 uM do not inhibit the NADH oxidation activity of the reductase component C1 but do affect the hydroxylation activity of the C1-C2 complex. Maximal reductase activity is achieved only upon HPA binding to the reductase component C1 before interaction with NADH. HPA stimulates the rates of both the reduction of FMN and release of reduced FMN from the reductase component.</text>
</comment>
<comment type="biophysicochemical properties">
    <kinetics>
        <KM evidence="2">12 uM for NADH (with FMN as cosubstrate)</KM>
        <KM evidence="2">28 uM for NADH (with FAD as cosubstrate)</KM>
        <KM evidence="3">21 uM for NADH (with FMN as cosubstrate)</KM>
        <KM evidence="3">22 uM for NADH (with FAD as cosubstrate)</KM>
        <text evidence="3">Values measured using the C1-C2 complex. kcat is 343 min(-1) for the reduction of FMN with NADH.</text>
    </kinetics>
    <redoxPotential>
        <text evidence="4">E(0) is -236 mV for C1, and -245 mV for C1-HPA complex.</text>
    </redoxPotential>
</comment>
<comment type="pathway">
    <text evidence="2">Aromatic compound metabolism; 4-hydroxyphenylacetate degradation; pyruvate and succinate semialdehyde from 4-hydroxyphenylacetate: step 1/7.</text>
</comment>
<comment type="subunit">
    <text evidence="2">Homodimer. The p-hydroxyphenylacetate 3-hydroxylase (HpaH) is composed of an oxygenase component C2 and a reductase component C1.</text>
</comment>
<comment type="similarity">
    <text evidence="6">Belongs to the non-flavoprotein flavin reductase family.</text>
</comment>
<sequence>MNQLNTAIVEKEVIDPMAFRRALGNFATGVTIMTAQTSSGERVGVTANSFNSVSLDPALVLWSIDKKSSSYRIFEEATHFGVNILSAAQIELSNRFARRSEDKFANIEFDLGVGNIPLFKNCSAAFECERYNIVEGGDHWIIIGRVVKFHDHGRSPLLYHQGAYSAVLPHPSLNMKSETAEGVFPGRLYDNMYYLLTQAVRAYQNDYQPKQLASGFRTSEARLLLVLESKTASSKCDLQREVAMPIREIEEATKILSEKGLLIDNGQHYELTEQGNACAHMLYKIAESHQEEVFAKYTVDERKLFKNMLKDLIGI</sequence>